<accession>Q8EPJ6</accession>
<proteinExistence type="inferred from homology"/>
<comment type="function">
    <text evidence="1">Pyrophosphatase that catalyzes the hydrolysis of nucleoside triphosphates to their monophosphate derivatives, with a high preference for the non-canonical purine nucleotides XTP (xanthosine triphosphate), dITP (deoxyinosine triphosphate) and ITP. Seems to function as a house-cleaning enzyme that removes non-canonical purine nucleotides from the nucleotide pool, thus preventing their incorporation into DNA/RNA and avoiding chromosomal lesions.</text>
</comment>
<comment type="catalytic activity">
    <reaction evidence="1">
        <text>XTP + H2O = XMP + diphosphate + H(+)</text>
        <dbReference type="Rhea" id="RHEA:28610"/>
        <dbReference type="ChEBI" id="CHEBI:15377"/>
        <dbReference type="ChEBI" id="CHEBI:15378"/>
        <dbReference type="ChEBI" id="CHEBI:33019"/>
        <dbReference type="ChEBI" id="CHEBI:57464"/>
        <dbReference type="ChEBI" id="CHEBI:61314"/>
        <dbReference type="EC" id="3.6.1.66"/>
    </reaction>
</comment>
<comment type="catalytic activity">
    <reaction evidence="1">
        <text>dITP + H2O = dIMP + diphosphate + H(+)</text>
        <dbReference type="Rhea" id="RHEA:28342"/>
        <dbReference type="ChEBI" id="CHEBI:15377"/>
        <dbReference type="ChEBI" id="CHEBI:15378"/>
        <dbReference type="ChEBI" id="CHEBI:33019"/>
        <dbReference type="ChEBI" id="CHEBI:61194"/>
        <dbReference type="ChEBI" id="CHEBI:61382"/>
        <dbReference type="EC" id="3.6.1.66"/>
    </reaction>
</comment>
<comment type="catalytic activity">
    <reaction evidence="1">
        <text>ITP + H2O = IMP + diphosphate + H(+)</text>
        <dbReference type="Rhea" id="RHEA:29399"/>
        <dbReference type="ChEBI" id="CHEBI:15377"/>
        <dbReference type="ChEBI" id="CHEBI:15378"/>
        <dbReference type="ChEBI" id="CHEBI:33019"/>
        <dbReference type="ChEBI" id="CHEBI:58053"/>
        <dbReference type="ChEBI" id="CHEBI:61402"/>
        <dbReference type="EC" id="3.6.1.66"/>
    </reaction>
</comment>
<comment type="cofactor">
    <cofactor evidence="1">
        <name>Mg(2+)</name>
        <dbReference type="ChEBI" id="CHEBI:18420"/>
    </cofactor>
    <text evidence="1">Binds 1 Mg(2+) ion per subunit.</text>
</comment>
<comment type="subunit">
    <text evidence="1">Homodimer.</text>
</comment>
<comment type="similarity">
    <text evidence="1">Belongs to the HAM1 NTPase family.</text>
</comment>
<reference key="1">
    <citation type="journal article" date="2002" name="Nucleic Acids Res.">
        <title>Genome sequence of Oceanobacillus iheyensis isolated from the Iheya Ridge and its unexpected adaptive capabilities to extreme environments.</title>
        <authorList>
            <person name="Takami H."/>
            <person name="Takaki Y."/>
            <person name="Uchiyama I."/>
        </authorList>
    </citation>
    <scope>NUCLEOTIDE SEQUENCE [LARGE SCALE GENOMIC DNA]</scope>
    <source>
        <strain>DSM 14371 / CIP 107618 / JCM 11309 / KCTC 3954 / HTE831</strain>
    </source>
</reference>
<gene>
    <name type="ordered locus">OB2105</name>
</gene>
<organism>
    <name type="scientific">Oceanobacillus iheyensis (strain DSM 14371 / CIP 107618 / JCM 11309 / KCTC 3954 / HTE831)</name>
    <dbReference type="NCBI Taxonomy" id="221109"/>
    <lineage>
        <taxon>Bacteria</taxon>
        <taxon>Bacillati</taxon>
        <taxon>Bacillota</taxon>
        <taxon>Bacilli</taxon>
        <taxon>Bacillales</taxon>
        <taxon>Bacillaceae</taxon>
        <taxon>Oceanobacillus</taxon>
    </lineage>
</organism>
<keyword id="KW-0378">Hydrolase</keyword>
<keyword id="KW-0460">Magnesium</keyword>
<keyword id="KW-0479">Metal-binding</keyword>
<keyword id="KW-0546">Nucleotide metabolism</keyword>
<keyword id="KW-0547">Nucleotide-binding</keyword>
<keyword id="KW-1185">Reference proteome</keyword>
<protein>
    <recommendedName>
        <fullName evidence="1">dITP/XTP pyrophosphatase</fullName>
        <ecNumber evidence="1">3.6.1.66</ecNumber>
    </recommendedName>
    <alternativeName>
        <fullName evidence="1">Non-canonical purine NTP pyrophosphatase</fullName>
    </alternativeName>
    <alternativeName>
        <fullName evidence="1">Non-standard purine NTP pyrophosphatase</fullName>
    </alternativeName>
    <alternativeName>
        <fullName evidence="1">Nucleoside-triphosphate diphosphatase</fullName>
    </alternativeName>
    <alternativeName>
        <fullName evidence="1">Nucleoside-triphosphate pyrophosphatase</fullName>
        <shortName evidence="1">NTPase</shortName>
    </alternativeName>
</protein>
<name>IXTPA_OCEIH</name>
<feature type="chain" id="PRO_0000178203" description="dITP/XTP pyrophosphatase">
    <location>
        <begin position="1"/>
        <end position="197"/>
    </location>
</feature>
<feature type="active site" description="Proton acceptor" evidence="1">
    <location>
        <position position="71"/>
    </location>
</feature>
<feature type="binding site" evidence="1">
    <location>
        <begin position="8"/>
        <end position="13"/>
    </location>
    <ligand>
        <name>substrate</name>
    </ligand>
</feature>
<feature type="binding site" evidence="1">
    <location>
        <position position="42"/>
    </location>
    <ligand>
        <name>Mg(2+)</name>
        <dbReference type="ChEBI" id="CHEBI:18420"/>
    </ligand>
</feature>
<feature type="binding site" evidence="1">
    <location>
        <position position="71"/>
    </location>
    <ligand>
        <name>Mg(2+)</name>
        <dbReference type="ChEBI" id="CHEBI:18420"/>
    </ligand>
</feature>
<feature type="binding site" evidence="1">
    <location>
        <position position="72"/>
    </location>
    <ligand>
        <name>substrate</name>
    </ligand>
</feature>
<feature type="binding site" evidence="1">
    <location>
        <begin position="154"/>
        <end position="157"/>
    </location>
    <ligand>
        <name>substrate</name>
    </ligand>
</feature>
<feature type="binding site" evidence="1">
    <location>
        <position position="177"/>
    </location>
    <ligand>
        <name>substrate</name>
    </ligand>
</feature>
<feature type="binding site" evidence="1">
    <location>
        <begin position="182"/>
        <end position="183"/>
    </location>
    <ligand>
        <name>substrate</name>
    </ligand>
</feature>
<dbReference type="EC" id="3.6.1.66" evidence="1"/>
<dbReference type="EMBL" id="BA000028">
    <property type="protein sequence ID" value="BAC14061.1"/>
    <property type="molecule type" value="Genomic_DNA"/>
</dbReference>
<dbReference type="RefSeq" id="WP_011066500.1">
    <property type="nucleotide sequence ID" value="NC_004193.1"/>
</dbReference>
<dbReference type="SMR" id="Q8EPJ6"/>
<dbReference type="STRING" id="221109.gene:10734353"/>
<dbReference type="KEGG" id="oih:OB2105"/>
<dbReference type="eggNOG" id="COG0127">
    <property type="taxonomic scope" value="Bacteria"/>
</dbReference>
<dbReference type="HOGENOM" id="CLU_082080_0_2_9"/>
<dbReference type="OrthoDB" id="9807456at2"/>
<dbReference type="PhylomeDB" id="Q8EPJ6"/>
<dbReference type="Proteomes" id="UP000000822">
    <property type="component" value="Chromosome"/>
</dbReference>
<dbReference type="GO" id="GO:0005829">
    <property type="term" value="C:cytosol"/>
    <property type="evidence" value="ECO:0007669"/>
    <property type="project" value="TreeGrafter"/>
</dbReference>
<dbReference type="GO" id="GO:0035870">
    <property type="term" value="F:dITP diphosphatase activity"/>
    <property type="evidence" value="ECO:0007669"/>
    <property type="project" value="RHEA"/>
</dbReference>
<dbReference type="GO" id="GO:0036220">
    <property type="term" value="F:ITP diphosphatase activity"/>
    <property type="evidence" value="ECO:0007669"/>
    <property type="project" value="UniProtKB-EC"/>
</dbReference>
<dbReference type="GO" id="GO:0046872">
    <property type="term" value="F:metal ion binding"/>
    <property type="evidence" value="ECO:0007669"/>
    <property type="project" value="UniProtKB-KW"/>
</dbReference>
<dbReference type="GO" id="GO:0000166">
    <property type="term" value="F:nucleotide binding"/>
    <property type="evidence" value="ECO:0007669"/>
    <property type="project" value="UniProtKB-KW"/>
</dbReference>
<dbReference type="GO" id="GO:0017111">
    <property type="term" value="F:ribonucleoside triphosphate phosphatase activity"/>
    <property type="evidence" value="ECO:0007669"/>
    <property type="project" value="InterPro"/>
</dbReference>
<dbReference type="GO" id="GO:0036222">
    <property type="term" value="F:XTP diphosphatase activity"/>
    <property type="evidence" value="ECO:0007669"/>
    <property type="project" value="RHEA"/>
</dbReference>
<dbReference type="GO" id="GO:0009117">
    <property type="term" value="P:nucleotide metabolic process"/>
    <property type="evidence" value="ECO:0007669"/>
    <property type="project" value="UniProtKB-KW"/>
</dbReference>
<dbReference type="GO" id="GO:0009146">
    <property type="term" value="P:purine nucleoside triphosphate catabolic process"/>
    <property type="evidence" value="ECO:0007669"/>
    <property type="project" value="UniProtKB-UniRule"/>
</dbReference>
<dbReference type="CDD" id="cd00515">
    <property type="entry name" value="HAM1"/>
    <property type="match status" value="1"/>
</dbReference>
<dbReference type="FunFam" id="3.90.950.10:FF:000001">
    <property type="entry name" value="dITP/XTP pyrophosphatase"/>
    <property type="match status" value="1"/>
</dbReference>
<dbReference type="Gene3D" id="3.90.950.10">
    <property type="match status" value="1"/>
</dbReference>
<dbReference type="HAMAP" id="MF_01405">
    <property type="entry name" value="Non_canon_purine_NTPase"/>
    <property type="match status" value="1"/>
</dbReference>
<dbReference type="InterPro" id="IPR020922">
    <property type="entry name" value="dITP/XTP_pyrophosphatase"/>
</dbReference>
<dbReference type="InterPro" id="IPR029001">
    <property type="entry name" value="ITPase-like_fam"/>
</dbReference>
<dbReference type="InterPro" id="IPR002637">
    <property type="entry name" value="RdgB/HAM1"/>
</dbReference>
<dbReference type="NCBIfam" id="NF011397">
    <property type="entry name" value="PRK14822.1"/>
    <property type="match status" value="1"/>
</dbReference>
<dbReference type="NCBIfam" id="TIGR00042">
    <property type="entry name" value="RdgB/HAM1 family non-canonical purine NTP pyrophosphatase"/>
    <property type="match status" value="1"/>
</dbReference>
<dbReference type="PANTHER" id="PTHR11067:SF9">
    <property type="entry name" value="INOSINE TRIPHOSPHATE PYROPHOSPHATASE"/>
    <property type="match status" value="1"/>
</dbReference>
<dbReference type="PANTHER" id="PTHR11067">
    <property type="entry name" value="INOSINE TRIPHOSPHATE PYROPHOSPHATASE/HAM1 PROTEIN"/>
    <property type="match status" value="1"/>
</dbReference>
<dbReference type="Pfam" id="PF01725">
    <property type="entry name" value="Ham1p_like"/>
    <property type="match status" value="1"/>
</dbReference>
<dbReference type="SUPFAM" id="SSF52972">
    <property type="entry name" value="ITPase-like"/>
    <property type="match status" value="1"/>
</dbReference>
<evidence type="ECO:0000255" key="1">
    <source>
        <dbReference type="HAMAP-Rule" id="MF_01405"/>
    </source>
</evidence>
<sequence length="197" mass="22020">MKKIIVATKNKGKAKEFKEFFASFDIEAISLLDLPESIPDIEETGTTFEENAALKAEQISERFNTAVIADDSGLLIDALDGRPGLYSARYAGEPTNDQANIEKVLKEMQDVPDNDRSARFICVLAIAQPGKETNFCTGYCEGHIHSKQKGDHGFGYDPIFIPKKYDVTMAELDPAKKNQISHRKNAIDQLEKWLHTI</sequence>